<proteinExistence type="inferred from homology"/>
<comment type="function">
    <text evidence="1">Major role in the synthesis of nucleoside triphosphates other than ATP. The ATP gamma phosphate is transferred to the NDP beta phosphate via a ping-pong mechanism, using a phosphorylated active-site intermediate.</text>
</comment>
<comment type="catalytic activity">
    <reaction evidence="1">
        <text>a 2'-deoxyribonucleoside 5'-diphosphate + ATP = a 2'-deoxyribonucleoside 5'-triphosphate + ADP</text>
        <dbReference type="Rhea" id="RHEA:44640"/>
        <dbReference type="ChEBI" id="CHEBI:30616"/>
        <dbReference type="ChEBI" id="CHEBI:61560"/>
        <dbReference type="ChEBI" id="CHEBI:73316"/>
        <dbReference type="ChEBI" id="CHEBI:456216"/>
        <dbReference type="EC" id="2.7.4.6"/>
    </reaction>
</comment>
<comment type="catalytic activity">
    <reaction evidence="1">
        <text>a ribonucleoside 5'-diphosphate + ATP = a ribonucleoside 5'-triphosphate + ADP</text>
        <dbReference type="Rhea" id="RHEA:18113"/>
        <dbReference type="ChEBI" id="CHEBI:30616"/>
        <dbReference type="ChEBI" id="CHEBI:57930"/>
        <dbReference type="ChEBI" id="CHEBI:61557"/>
        <dbReference type="ChEBI" id="CHEBI:456216"/>
        <dbReference type="EC" id="2.7.4.6"/>
    </reaction>
</comment>
<comment type="cofactor">
    <cofactor evidence="1">
        <name>Mg(2+)</name>
        <dbReference type="ChEBI" id="CHEBI:18420"/>
    </cofactor>
</comment>
<comment type="subcellular location">
    <subcellularLocation>
        <location evidence="1">Cytoplasm</location>
    </subcellularLocation>
</comment>
<comment type="similarity">
    <text evidence="1">Belongs to the NDK family.</text>
</comment>
<reference key="1">
    <citation type="journal article" date="2009" name="Proc. Natl. Acad. Sci. U.S.A.">
        <title>Biogeography of the Sulfolobus islandicus pan-genome.</title>
        <authorList>
            <person name="Reno M.L."/>
            <person name="Held N.L."/>
            <person name="Fields C.J."/>
            <person name="Burke P.V."/>
            <person name="Whitaker R.J."/>
        </authorList>
    </citation>
    <scope>NUCLEOTIDE SEQUENCE [LARGE SCALE GENOMIC DNA]</scope>
    <source>
        <strain>M.16.27</strain>
    </source>
</reference>
<organism>
    <name type="scientific">Saccharolobus islandicus (strain M.16.27)</name>
    <name type="common">Sulfolobus islandicus</name>
    <dbReference type="NCBI Taxonomy" id="427318"/>
    <lineage>
        <taxon>Archaea</taxon>
        <taxon>Thermoproteota</taxon>
        <taxon>Thermoprotei</taxon>
        <taxon>Sulfolobales</taxon>
        <taxon>Sulfolobaceae</taxon>
        <taxon>Saccharolobus</taxon>
    </lineage>
</organism>
<accession>C3MZM4</accession>
<gene>
    <name evidence="1" type="primary">ndk</name>
    <name type="ordered locus">M1627_1985</name>
</gene>
<name>NDK_SACI3</name>
<dbReference type="EC" id="2.7.4.6" evidence="1"/>
<dbReference type="EMBL" id="CP001401">
    <property type="protein sequence ID" value="ACP55856.1"/>
    <property type="molecule type" value="Genomic_DNA"/>
</dbReference>
<dbReference type="RefSeq" id="WP_012711881.1">
    <property type="nucleotide sequence ID" value="NC_012632.1"/>
</dbReference>
<dbReference type="SMR" id="C3MZM4"/>
<dbReference type="GeneID" id="84062220"/>
<dbReference type="KEGG" id="sim:M1627_1985"/>
<dbReference type="HOGENOM" id="CLU_060216_6_3_2"/>
<dbReference type="Proteomes" id="UP000002307">
    <property type="component" value="Chromosome"/>
</dbReference>
<dbReference type="GO" id="GO:0005737">
    <property type="term" value="C:cytoplasm"/>
    <property type="evidence" value="ECO:0007669"/>
    <property type="project" value="UniProtKB-SubCell"/>
</dbReference>
<dbReference type="GO" id="GO:0005524">
    <property type="term" value="F:ATP binding"/>
    <property type="evidence" value="ECO:0007669"/>
    <property type="project" value="UniProtKB-UniRule"/>
</dbReference>
<dbReference type="GO" id="GO:0046872">
    <property type="term" value="F:metal ion binding"/>
    <property type="evidence" value="ECO:0007669"/>
    <property type="project" value="UniProtKB-KW"/>
</dbReference>
<dbReference type="GO" id="GO:0004550">
    <property type="term" value="F:nucleoside diphosphate kinase activity"/>
    <property type="evidence" value="ECO:0007669"/>
    <property type="project" value="UniProtKB-UniRule"/>
</dbReference>
<dbReference type="GO" id="GO:0006241">
    <property type="term" value="P:CTP biosynthetic process"/>
    <property type="evidence" value="ECO:0007669"/>
    <property type="project" value="UniProtKB-UniRule"/>
</dbReference>
<dbReference type="GO" id="GO:0006183">
    <property type="term" value="P:GTP biosynthetic process"/>
    <property type="evidence" value="ECO:0007669"/>
    <property type="project" value="UniProtKB-UniRule"/>
</dbReference>
<dbReference type="GO" id="GO:0006228">
    <property type="term" value="P:UTP biosynthetic process"/>
    <property type="evidence" value="ECO:0007669"/>
    <property type="project" value="UniProtKB-UniRule"/>
</dbReference>
<dbReference type="CDD" id="cd04413">
    <property type="entry name" value="NDPk_I"/>
    <property type="match status" value="1"/>
</dbReference>
<dbReference type="FunFam" id="3.30.70.141:FF:000003">
    <property type="entry name" value="Nucleoside diphosphate kinase"/>
    <property type="match status" value="1"/>
</dbReference>
<dbReference type="Gene3D" id="3.30.70.141">
    <property type="entry name" value="Nucleoside diphosphate kinase-like domain"/>
    <property type="match status" value="1"/>
</dbReference>
<dbReference type="HAMAP" id="MF_00451">
    <property type="entry name" value="NDP_kinase"/>
    <property type="match status" value="1"/>
</dbReference>
<dbReference type="InterPro" id="IPR034907">
    <property type="entry name" value="NDK-like_dom"/>
</dbReference>
<dbReference type="InterPro" id="IPR036850">
    <property type="entry name" value="NDK-like_dom_sf"/>
</dbReference>
<dbReference type="InterPro" id="IPR001564">
    <property type="entry name" value="Nucleoside_diP_kinase"/>
</dbReference>
<dbReference type="InterPro" id="IPR023005">
    <property type="entry name" value="Nucleoside_diP_kinase_AS"/>
</dbReference>
<dbReference type="NCBIfam" id="NF001908">
    <property type="entry name" value="PRK00668.1"/>
    <property type="match status" value="1"/>
</dbReference>
<dbReference type="PANTHER" id="PTHR11349">
    <property type="entry name" value="NUCLEOSIDE DIPHOSPHATE KINASE"/>
    <property type="match status" value="1"/>
</dbReference>
<dbReference type="Pfam" id="PF00334">
    <property type="entry name" value="NDK"/>
    <property type="match status" value="1"/>
</dbReference>
<dbReference type="PRINTS" id="PR01243">
    <property type="entry name" value="NUCDPKINASE"/>
</dbReference>
<dbReference type="SMART" id="SM00562">
    <property type="entry name" value="NDK"/>
    <property type="match status" value="1"/>
</dbReference>
<dbReference type="SUPFAM" id="SSF54919">
    <property type="entry name" value="Nucleoside diphosphate kinase, NDK"/>
    <property type="match status" value="1"/>
</dbReference>
<dbReference type="PROSITE" id="PS00469">
    <property type="entry name" value="NDPK"/>
    <property type="match status" value="1"/>
</dbReference>
<dbReference type="PROSITE" id="PS51374">
    <property type="entry name" value="NDPK_LIKE"/>
    <property type="match status" value="1"/>
</dbReference>
<keyword id="KW-0067">ATP-binding</keyword>
<keyword id="KW-0963">Cytoplasm</keyword>
<keyword id="KW-0418">Kinase</keyword>
<keyword id="KW-0460">Magnesium</keyword>
<keyword id="KW-0479">Metal-binding</keyword>
<keyword id="KW-0546">Nucleotide metabolism</keyword>
<keyword id="KW-0547">Nucleotide-binding</keyword>
<keyword id="KW-0597">Phosphoprotein</keyword>
<keyword id="KW-0808">Transferase</keyword>
<protein>
    <recommendedName>
        <fullName evidence="1">Nucleoside diphosphate kinase</fullName>
        <shortName evidence="1">NDK</shortName>
        <shortName evidence="1">NDP kinase</shortName>
        <ecNumber evidence="1">2.7.4.6</ecNumber>
    </recommendedName>
    <alternativeName>
        <fullName evidence="1">Nucleoside-2-P kinase</fullName>
    </alternativeName>
</protein>
<feature type="chain" id="PRO_1000206223" description="Nucleoside diphosphate kinase">
    <location>
        <begin position="1"/>
        <end position="138"/>
    </location>
</feature>
<feature type="active site" description="Pros-phosphohistidine intermediate" evidence="1">
    <location>
        <position position="117"/>
    </location>
</feature>
<feature type="binding site" evidence="1">
    <location>
        <position position="11"/>
    </location>
    <ligand>
        <name>ATP</name>
        <dbReference type="ChEBI" id="CHEBI:30616"/>
    </ligand>
</feature>
<feature type="binding site" evidence="1">
    <location>
        <position position="59"/>
    </location>
    <ligand>
        <name>ATP</name>
        <dbReference type="ChEBI" id="CHEBI:30616"/>
    </ligand>
</feature>
<feature type="binding site" evidence="1">
    <location>
        <position position="87"/>
    </location>
    <ligand>
        <name>ATP</name>
        <dbReference type="ChEBI" id="CHEBI:30616"/>
    </ligand>
</feature>
<feature type="binding site" evidence="1">
    <location>
        <position position="93"/>
    </location>
    <ligand>
        <name>ATP</name>
        <dbReference type="ChEBI" id="CHEBI:30616"/>
    </ligand>
</feature>
<feature type="binding site" evidence="1">
    <location>
        <position position="104"/>
    </location>
    <ligand>
        <name>ATP</name>
        <dbReference type="ChEBI" id="CHEBI:30616"/>
    </ligand>
</feature>
<feature type="binding site" evidence="1">
    <location>
        <position position="114"/>
    </location>
    <ligand>
        <name>ATP</name>
        <dbReference type="ChEBI" id="CHEBI:30616"/>
    </ligand>
</feature>
<sequence length="138" mass="15612">MVMQRTFVMIKPDGVKRGLIGEIISRFEKRGLKIVSLKMVKMSRDIAEKLYDEHKGKSFFEELVNYVTSGPVVCMVIEGDDVVQVIRRMIGNTDPKEAPPGTIRGDYALSKSENVIHASDSIEKAQREMSLFFDKSDL</sequence>
<evidence type="ECO:0000255" key="1">
    <source>
        <dbReference type="HAMAP-Rule" id="MF_00451"/>
    </source>
</evidence>